<gene>
    <name evidence="1" type="primary">argE</name>
    <name type="ordered locus">EcHS_A4191</name>
</gene>
<feature type="chain" id="PRO_1000065055" description="Acetylornithine deacetylase">
    <location>
        <begin position="1"/>
        <end position="383"/>
    </location>
</feature>
<feature type="active site" evidence="1">
    <location>
        <position position="82"/>
    </location>
</feature>
<feature type="active site" evidence="1">
    <location>
        <position position="144"/>
    </location>
</feature>
<feature type="binding site" evidence="1">
    <location>
        <position position="80"/>
    </location>
    <ligand>
        <name>Zn(2+)</name>
        <dbReference type="ChEBI" id="CHEBI:29105"/>
        <label>1</label>
    </ligand>
</feature>
<feature type="binding site" evidence="1">
    <location>
        <position position="112"/>
    </location>
    <ligand>
        <name>Zn(2+)</name>
        <dbReference type="ChEBI" id="CHEBI:29105"/>
        <label>1</label>
    </ligand>
</feature>
<feature type="binding site" evidence="1">
    <location>
        <position position="112"/>
    </location>
    <ligand>
        <name>Zn(2+)</name>
        <dbReference type="ChEBI" id="CHEBI:29105"/>
        <label>2</label>
    </ligand>
</feature>
<feature type="binding site" evidence="1">
    <location>
        <position position="145"/>
    </location>
    <ligand>
        <name>Zn(2+)</name>
        <dbReference type="ChEBI" id="CHEBI:29105"/>
        <label>2</label>
    </ligand>
</feature>
<feature type="binding site" evidence="1">
    <location>
        <position position="169"/>
    </location>
    <ligand>
        <name>Zn(2+)</name>
        <dbReference type="ChEBI" id="CHEBI:29105"/>
        <label>1</label>
    </ligand>
</feature>
<feature type="binding site" evidence="1">
    <location>
        <position position="355"/>
    </location>
    <ligand>
        <name>Zn(2+)</name>
        <dbReference type="ChEBI" id="CHEBI:29105"/>
        <label>2</label>
    </ligand>
</feature>
<name>ARGE_ECOHS</name>
<keyword id="KW-0028">Amino-acid biosynthesis</keyword>
<keyword id="KW-0055">Arginine biosynthesis</keyword>
<keyword id="KW-0170">Cobalt</keyword>
<keyword id="KW-0963">Cytoplasm</keyword>
<keyword id="KW-0378">Hydrolase</keyword>
<keyword id="KW-0479">Metal-binding</keyword>
<keyword id="KW-0862">Zinc</keyword>
<accession>A8A765</accession>
<sequence length="383" mass="42359">MKNKLPPFIEIYRALIATPSISATEEALDQSNADLITLLADWFKDLGFNVEVQPVPGTRNKFNMLASIGQGAGGLLLAGHTDTVPFDDGRWTRDPFTLTEHDGKLYGLGTADMKGFFAFILDALRDVDVTKLKKPLYILATADEETSMAGARYFAETTALRPDCAIIGEPTSLQPVRAHKGHISNAIRIQGQSGHSSDPARGVNAIELMHDAIGHILQLRDNLKERYHYEAFTVPYPTLNLGHIHGGDASNRICACCELHMDIRPLPGMTLNELNGLLNDALAPVSERWPGRLTVDELHPPIPGYECPPNHQLVEVVEKLLGAKTEVVNYCTEAPFIQTLCPTLVLGPGSINQAHQPDEYLETRFIKPTRELIIQVIHHFCWH</sequence>
<comment type="function">
    <text evidence="1">Catalyzes the hydrolysis of the amide bond of N(2)-acetylated L-amino acids. Cleaves the acetyl group from N-acetyl-L-ornithine to form L-ornithine, an intermediate in L-arginine biosynthesis pathway, and a branchpoint in the synthesis of polyamines.</text>
</comment>
<comment type="catalytic activity">
    <reaction evidence="1">
        <text>N(2)-acetyl-L-ornithine + H2O = L-ornithine + acetate</text>
        <dbReference type="Rhea" id="RHEA:15941"/>
        <dbReference type="ChEBI" id="CHEBI:15377"/>
        <dbReference type="ChEBI" id="CHEBI:30089"/>
        <dbReference type="ChEBI" id="CHEBI:46911"/>
        <dbReference type="ChEBI" id="CHEBI:57805"/>
        <dbReference type="EC" id="3.5.1.16"/>
    </reaction>
</comment>
<comment type="cofactor">
    <cofactor evidence="1">
        <name>Zn(2+)</name>
        <dbReference type="ChEBI" id="CHEBI:29105"/>
    </cofactor>
    <cofactor evidence="1">
        <name>Co(2+)</name>
        <dbReference type="ChEBI" id="CHEBI:48828"/>
    </cofactor>
    <text evidence="1">Binds 2 Zn(2+) or Co(2+) ions per subunit.</text>
</comment>
<comment type="cofactor">
    <cofactor evidence="1">
        <name>glutathione</name>
        <dbReference type="ChEBI" id="CHEBI:57925"/>
    </cofactor>
</comment>
<comment type="pathway">
    <text evidence="1">Amino-acid biosynthesis; L-arginine biosynthesis; L-ornithine from N(2)-acetyl-L-ornithine (linear): step 1/1.</text>
</comment>
<comment type="subunit">
    <text evidence="1">Homodimer.</text>
</comment>
<comment type="subcellular location">
    <subcellularLocation>
        <location evidence="1">Cytoplasm</location>
    </subcellularLocation>
</comment>
<comment type="similarity">
    <text evidence="1">Belongs to the peptidase M20A family. ArgE subfamily.</text>
</comment>
<dbReference type="EC" id="3.5.1.16" evidence="1"/>
<dbReference type="EMBL" id="CP000802">
    <property type="protein sequence ID" value="ABV08369.1"/>
    <property type="molecule type" value="Genomic_DNA"/>
</dbReference>
<dbReference type="RefSeq" id="WP_001301272.1">
    <property type="nucleotide sequence ID" value="NC_009800.1"/>
</dbReference>
<dbReference type="SMR" id="A8A765"/>
<dbReference type="MEROPS" id="M20.974"/>
<dbReference type="KEGG" id="ecx:EcHS_A4191"/>
<dbReference type="HOGENOM" id="CLU_021802_2_4_6"/>
<dbReference type="UniPathway" id="UPA00068">
    <property type="reaction ID" value="UER00110"/>
</dbReference>
<dbReference type="GO" id="GO:0005737">
    <property type="term" value="C:cytoplasm"/>
    <property type="evidence" value="ECO:0007669"/>
    <property type="project" value="UniProtKB-SubCell"/>
</dbReference>
<dbReference type="GO" id="GO:0008777">
    <property type="term" value="F:acetylornithine deacetylase activity"/>
    <property type="evidence" value="ECO:0007669"/>
    <property type="project" value="UniProtKB-UniRule"/>
</dbReference>
<dbReference type="GO" id="GO:0008270">
    <property type="term" value="F:zinc ion binding"/>
    <property type="evidence" value="ECO:0007669"/>
    <property type="project" value="UniProtKB-UniRule"/>
</dbReference>
<dbReference type="GO" id="GO:0006526">
    <property type="term" value="P:L-arginine biosynthetic process"/>
    <property type="evidence" value="ECO:0007669"/>
    <property type="project" value="UniProtKB-UniRule"/>
</dbReference>
<dbReference type="CDD" id="cd03894">
    <property type="entry name" value="M20_ArgE"/>
    <property type="match status" value="1"/>
</dbReference>
<dbReference type="FunFam" id="3.30.70.360:FF:000003">
    <property type="entry name" value="Acetylornithine deacetylase"/>
    <property type="match status" value="1"/>
</dbReference>
<dbReference type="Gene3D" id="3.30.70.360">
    <property type="match status" value="1"/>
</dbReference>
<dbReference type="Gene3D" id="3.40.630.10">
    <property type="entry name" value="Zn peptidases"/>
    <property type="match status" value="1"/>
</dbReference>
<dbReference type="HAMAP" id="MF_01108">
    <property type="entry name" value="ArgE"/>
    <property type="match status" value="1"/>
</dbReference>
<dbReference type="InterPro" id="IPR010169">
    <property type="entry name" value="AcOrn-deacetyl"/>
</dbReference>
<dbReference type="InterPro" id="IPR001261">
    <property type="entry name" value="ArgE/DapE_CS"/>
</dbReference>
<dbReference type="InterPro" id="IPR036264">
    <property type="entry name" value="Bact_exopeptidase_dim_dom"/>
</dbReference>
<dbReference type="InterPro" id="IPR002933">
    <property type="entry name" value="Peptidase_M20"/>
</dbReference>
<dbReference type="InterPro" id="IPR011650">
    <property type="entry name" value="Peptidase_M20_dimer"/>
</dbReference>
<dbReference type="InterPro" id="IPR050072">
    <property type="entry name" value="Peptidase_M20A"/>
</dbReference>
<dbReference type="NCBIfam" id="TIGR01892">
    <property type="entry name" value="AcOrn-deacetyl"/>
    <property type="match status" value="1"/>
</dbReference>
<dbReference type="NCBIfam" id="NF003474">
    <property type="entry name" value="PRK05111.1"/>
    <property type="match status" value="1"/>
</dbReference>
<dbReference type="PANTHER" id="PTHR43808">
    <property type="entry name" value="ACETYLORNITHINE DEACETYLASE"/>
    <property type="match status" value="1"/>
</dbReference>
<dbReference type="PANTHER" id="PTHR43808:SF1">
    <property type="entry name" value="ACETYLORNITHINE DEACETYLASE"/>
    <property type="match status" value="1"/>
</dbReference>
<dbReference type="Pfam" id="PF07687">
    <property type="entry name" value="M20_dimer"/>
    <property type="match status" value="1"/>
</dbReference>
<dbReference type="Pfam" id="PF01546">
    <property type="entry name" value="Peptidase_M20"/>
    <property type="match status" value="1"/>
</dbReference>
<dbReference type="SUPFAM" id="SSF55031">
    <property type="entry name" value="Bacterial exopeptidase dimerisation domain"/>
    <property type="match status" value="1"/>
</dbReference>
<dbReference type="SUPFAM" id="SSF53187">
    <property type="entry name" value="Zn-dependent exopeptidases"/>
    <property type="match status" value="1"/>
</dbReference>
<dbReference type="PROSITE" id="PS00758">
    <property type="entry name" value="ARGE_DAPE_CPG2_1"/>
    <property type="match status" value="1"/>
</dbReference>
<dbReference type="PROSITE" id="PS00759">
    <property type="entry name" value="ARGE_DAPE_CPG2_2"/>
    <property type="match status" value="1"/>
</dbReference>
<protein>
    <recommendedName>
        <fullName evidence="1">Acetylornithine deacetylase</fullName>
        <shortName evidence="1">AO</shortName>
        <shortName evidence="1">Acetylornithinase</shortName>
        <ecNumber evidence="1">3.5.1.16</ecNumber>
    </recommendedName>
    <alternativeName>
        <fullName evidence="1">N-acetylornithinase</fullName>
        <shortName evidence="1">NAO</shortName>
    </alternativeName>
</protein>
<reference key="1">
    <citation type="journal article" date="2008" name="J. Bacteriol.">
        <title>The pangenome structure of Escherichia coli: comparative genomic analysis of E. coli commensal and pathogenic isolates.</title>
        <authorList>
            <person name="Rasko D.A."/>
            <person name="Rosovitz M.J."/>
            <person name="Myers G.S.A."/>
            <person name="Mongodin E.F."/>
            <person name="Fricke W.F."/>
            <person name="Gajer P."/>
            <person name="Crabtree J."/>
            <person name="Sebaihia M."/>
            <person name="Thomson N.R."/>
            <person name="Chaudhuri R."/>
            <person name="Henderson I.R."/>
            <person name="Sperandio V."/>
            <person name="Ravel J."/>
        </authorList>
    </citation>
    <scope>NUCLEOTIDE SEQUENCE [LARGE SCALE GENOMIC DNA]</scope>
    <source>
        <strain>HS</strain>
    </source>
</reference>
<evidence type="ECO:0000255" key="1">
    <source>
        <dbReference type="HAMAP-Rule" id="MF_01108"/>
    </source>
</evidence>
<proteinExistence type="inferred from homology"/>
<organism>
    <name type="scientific">Escherichia coli O9:H4 (strain HS)</name>
    <dbReference type="NCBI Taxonomy" id="331112"/>
    <lineage>
        <taxon>Bacteria</taxon>
        <taxon>Pseudomonadati</taxon>
        <taxon>Pseudomonadota</taxon>
        <taxon>Gammaproteobacteria</taxon>
        <taxon>Enterobacterales</taxon>
        <taxon>Enterobacteriaceae</taxon>
        <taxon>Escherichia</taxon>
    </lineage>
</organism>